<sequence length="304" mass="34344">MWFKNCLVYRVNREVNFNADQLETQLAEFRFTPCGSQDKQKFGWVSAMGRNGDMMTHVSENRILICAKKEEKMLPASVIKDSLNAKVEAMEAQEGRPLKKKEKDNLKDDIVMDLLPRAFSRSSHTYVLIMPKEGFILVDASSYKKAEDVLALLRKTMGSLPVVPAIPEVAIETTLTEWVKTGDTPQGISMMDEAELKSVLEEGGVIRCKKQELTTDEIRNHIAADKVVTKLALNWQDRIEFIMAEDSGIKRLKFSDELKDQNDDIPREDQAARFDADFSLMCGEFSAFLPNLYETLGGLPNPNA</sequence>
<dbReference type="EMBL" id="CP000789">
    <property type="protein sequence ID" value="ABU70018.1"/>
    <property type="molecule type" value="Genomic_DNA"/>
</dbReference>
<dbReference type="RefSeq" id="WP_012127067.1">
    <property type="nucleotide sequence ID" value="NC_009783.1"/>
</dbReference>
<dbReference type="SMR" id="A7MT92"/>
<dbReference type="KEGG" id="vha:VIBHAR_01025"/>
<dbReference type="PATRIC" id="fig|338187.25.peg.1603"/>
<dbReference type="Proteomes" id="UP000008152">
    <property type="component" value="Chromosome I"/>
</dbReference>
<dbReference type="GO" id="GO:0043590">
    <property type="term" value="C:bacterial nucleoid"/>
    <property type="evidence" value="ECO:0007669"/>
    <property type="project" value="TreeGrafter"/>
</dbReference>
<dbReference type="GO" id="GO:0005737">
    <property type="term" value="C:cytoplasm"/>
    <property type="evidence" value="ECO:0007669"/>
    <property type="project" value="UniProtKB-UniRule"/>
</dbReference>
<dbReference type="GO" id="GO:0003690">
    <property type="term" value="F:double-stranded DNA binding"/>
    <property type="evidence" value="ECO:0007669"/>
    <property type="project" value="TreeGrafter"/>
</dbReference>
<dbReference type="GO" id="GO:0006310">
    <property type="term" value="P:DNA recombination"/>
    <property type="evidence" value="ECO:0007669"/>
    <property type="project" value="UniProtKB-UniRule"/>
</dbReference>
<dbReference type="GO" id="GO:0000018">
    <property type="term" value="P:regulation of DNA recombination"/>
    <property type="evidence" value="ECO:0007669"/>
    <property type="project" value="TreeGrafter"/>
</dbReference>
<dbReference type="HAMAP" id="MF_00194">
    <property type="entry name" value="RdgC"/>
    <property type="match status" value="1"/>
</dbReference>
<dbReference type="InterPro" id="IPR007476">
    <property type="entry name" value="RdgC"/>
</dbReference>
<dbReference type="NCBIfam" id="NF001462">
    <property type="entry name" value="PRK00321.1-3"/>
    <property type="match status" value="1"/>
</dbReference>
<dbReference type="NCBIfam" id="NF001464">
    <property type="entry name" value="PRK00321.1-5"/>
    <property type="match status" value="1"/>
</dbReference>
<dbReference type="PANTHER" id="PTHR38103">
    <property type="entry name" value="RECOMBINATION-ASSOCIATED PROTEIN RDGC"/>
    <property type="match status" value="1"/>
</dbReference>
<dbReference type="PANTHER" id="PTHR38103:SF1">
    <property type="entry name" value="RECOMBINATION-ASSOCIATED PROTEIN RDGC"/>
    <property type="match status" value="1"/>
</dbReference>
<dbReference type="Pfam" id="PF04381">
    <property type="entry name" value="RdgC"/>
    <property type="match status" value="1"/>
</dbReference>
<keyword id="KW-0963">Cytoplasm</keyword>
<keyword id="KW-0233">DNA recombination</keyword>
<feature type="chain" id="PRO_1000021243" description="Recombination-associated protein RdgC">
    <location>
        <begin position="1"/>
        <end position="304"/>
    </location>
</feature>
<name>RDGC_VIBC1</name>
<gene>
    <name evidence="1" type="primary">rdgC</name>
    <name type="ordered locus">VIBHAR_01025</name>
</gene>
<protein>
    <recommendedName>
        <fullName evidence="1">Recombination-associated protein RdgC</fullName>
    </recommendedName>
</protein>
<evidence type="ECO:0000255" key="1">
    <source>
        <dbReference type="HAMAP-Rule" id="MF_00194"/>
    </source>
</evidence>
<proteinExistence type="inferred from homology"/>
<comment type="function">
    <text evidence="1">May be involved in recombination.</text>
</comment>
<comment type="subcellular location">
    <subcellularLocation>
        <location evidence="1">Cytoplasm</location>
        <location evidence="1">Nucleoid</location>
    </subcellularLocation>
</comment>
<comment type="similarity">
    <text evidence="1">Belongs to the RdgC family.</text>
</comment>
<accession>A7MT92</accession>
<organism>
    <name type="scientific">Vibrio campbellii (strain ATCC BAA-1116)</name>
    <dbReference type="NCBI Taxonomy" id="2902295"/>
    <lineage>
        <taxon>Bacteria</taxon>
        <taxon>Pseudomonadati</taxon>
        <taxon>Pseudomonadota</taxon>
        <taxon>Gammaproteobacteria</taxon>
        <taxon>Vibrionales</taxon>
        <taxon>Vibrionaceae</taxon>
        <taxon>Vibrio</taxon>
    </lineage>
</organism>
<reference key="1">
    <citation type="submission" date="2007-08" db="EMBL/GenBank/DDBJ databases">
        <authorList>
            <consortium name="The Vibrio harveyi Genome Sequencing Project"/>
            <person name="Bassler B."/>
            <person name="Clifton S.W."/>
            <person name="Fulton L."/>
            <person name="Delehaunty K."/>
            <person name="Fronick C."/>
            <person name="Harrison M."/>
            <person name="Markivic C."/>
            <person name="Fulton R."/>
            <person name="Tin-Wollam A.-M."/>
            <person name="Shah N."/>
            <person name="Pepin K."/>
            <person name="Nash W."/>
            <person name="Thiruvilangam P."/>
            <person name="Bhonagiri V."/>
            <person name="Waters C."/>
            <person name="Tu K.C."/>
            <person name="Irgon J."/>
            <person name="Wilson R.K."/>
        </authorList>
    </citation>
    <scope>NUCLEOTIDE SEQUENCE [LARGE SCALE GENOMIC DNA]</scope>
    <source>
        <strain>ATCC BAA-1116 / BB120</strain>
    </source>
</reference>